<gene>
    <name evidence="1" type="primary">glmU</name>
    <name type="ordered locus">RPA2659</name>
</gene>
<protein>
    <recommendedName>
        <fullName evidence="1">Bifunctional protein GlmU</fullName>
    </recommendedName>
    <domain>
        <recommendedName>
            <fullName evidence="1">UDP-N-acetylglucosamine pyrophosphorylase</fullName>
            <ecNumber evidence="1">2.7.7.23</ecNumber>
        </recommendedName>
        <alternativeName>
            <fullName evidence="1">N-acetylglucosamine-1-phosphate uridyltransferase</fullName>
        </alternativeName>
    </domain>
    <domain>
        <recommendedName>
            <fullName evidence="1">Glucosamine-1-phosphate N-acetyltransferase</fullName>
            <ecNumber evidence="1">2.3.1.157</ecNumber>
        </recommendedName>
    </domain>
</protein>
<name>GLMU_RHOPA</name>
<accession>Q6N6F8</accession>
<proteinExistence type="inferred from homology"/>
<dbReference type="EC" id="2.7.7.23" evidence="1"/>
<dbReference type="EC" id="2.3.1.157" evidence="1"/>
<dbReference type="EMBL" id="BX572601">
    <property type="protein sequence ID" value="CAE28100.1"/>
    <property type="molecule type" value="Genomic_DNA"/>
</dbReference>
<dbReference type="RefSeq" id="WP_011158209.1">
    <property type="nucleotide sequence ID" value="NZ_CP116810.1"/>
</dbReference>
<dbReference type="SMR" id="Q6N6F8"/>
<dbReference type="STRING" id="258594.RPA2659"/>
<dbReference type="GeneID" id="66893733"/>
<dbReference type="eggNOG" id="COG1207">
    <property type="taxonomic scope" value="Bacteria"/>
</dbReference>
<dbReference type="HOGENOM" id="CLU_029499_15_2_5"/>
<dbReference type="PhylomeDB" id="Q6N6F8"/>
<dbReference type="UniPathway" id="UPA00113">
    <property type="reaction ID" value="UER00532"/>
</dbReference>
<dbReference type="UniPathway" id="UPA00113">
    <property type="reaction ID" value="UER00533"/>
</dbReference>
<dbReference type="UniPathway" id="UPA00973"/>
<dbReference type="GO" id="GO:0005737">
    <property type="term" value="C:cytoplasm"/>
    <property type="evidence" value="ECO:0007669"/>
    <property type="project" value="UniProtKB-SubCell"/>
</dbReference>
<dbReference type="GO" id="GO:0016020">
    <property type="term" value="C:membrane"/>
    <property type="evidence" value="ECO:0007669"/>
    <property type="project" value="GOC"/>
</dbReference>
<dbReference type="GO" id="GO:0019134">
    <property type="term" value="F:glucosamine-1-phosphate N-acetyltransferase activity"/>
    <property type="evidence" value="ECO:0007669"/>
    <property type="project" value="UniProtKB-UniRule"/>
</dbReference>
<dbReference type="GO" id="GO:0000287">
    <property type="term" value="F:magnesium ion binding"/>
    <property type="evidence" value="ECO:0007669"/>
    <property type="project" value="UniProtKB-UniRule"/>
</dbReference>
<dbReference type="GO" id="GO:0003977">
    <property type="term" value="F:UDP-N-acetylglucosamine diphosphorylase activity"/>
    <property type="evidence" value="ECO:0007669"/>
    <property type="project" value="UniProtKB-UniRule"/>
</dbReference>
<dbReference type="GO" id="GO:0000902">
    <property type="term" value="P:cell morphogenesis"/>
    <property type="evidence" value="ECO:0007669"/>
    <property type="project" value="UniProtKB-UniRule"/>
</dbReference>
<dbReference type="GO" id="GO:0071555">
    <property type="term" value="P:cell wall organization"/>
    <property type="evidence" value="ECO:0007669"/>
    <property type="project" value="UniProtKB-KW"/>
</dbReference>
<dbReference type="GO" id="GO:0009245">
    <property type="term" value="P:lipid A biosynthetic process"/>
    <property type="evidence" value="ECO:0007669"/>
    <property type="project" value="UniProtKB-UniRule"/>
</dbReference>
<dbReference type="GO" id="GO:0009252">
    <property type="term" value="P:peptidoglycan biosynthetic process"/>
    <property type="evidence" value="ECO:0007669"/>
    <property type="project" value="UniProtKB-UniRule"/>
</dbReference>
<dbReference type="GO" id="GO:0008360">
    <property type="term" value="P:regulation of cell shape"/>
    <property type="evidence" value="ECO:0007669"/>
    <property type="project" value="UniProtKB-KW"/>
</dbReference>
<dbReference type="GO" id="GO:0006048">
    <property type="term" value="P:UDP-N-acetylglucosamine biosynthetic process"/>
    <property type="evidence" value="ECO:0007669"/>
    <property type="project" value="UniProtKB-UniPathway"/>
</dbReference>
<dbReference type="CDD" id="cd02540">
    <property type="entry name" value="GT2_GlmU_N_bac"/>
    <property type="match status" value="1"/>
</dbReference>
<dbReference type="CDD" id="cd03353">
    <property type="entry name" value="LbH_GlmU_C"/>
    <property type="match status" value="1"/>
</dbReference>
<dbReference type="Gene3D" id="2.160.10.10">
    <property type="entry name" value="Hexapeptide repeat proteins"/>
    <property type="match status" value="1"/>
</dbReference>
<dbReference type="Gene3D" id="3.90.550.10">
    <property type="entry name" value="Spore Coat Polysaccharide Biosynthesis Protein SpsA, Chain A"/>
    <property type="match status" value="1"/>
</dbReference>
<dbReference type="HAMAP" id="MF_01631">
    <property type="entry name" value="GlmU"/>
    <property type="match status" value="1"/>
</dbReference>
<dbReference type="InterPro" id="IPR005882">
    <property type="entry name" value="Bifunctional_GlmU"/>
</dbReference>
<dbReference type="InterPro" id="IPR050065">
    <property type="entry name" value="GlmU-like"/>
</dbReference>
<dbReference type="InterPro" id="IPR038009">
    <property type="entry name" value="GlmU_C_LbH"/>
</dbReference>
<dbReference type="InterPro" id="IPR001451">
    <property type="entry name" value="Hexapep"/>
</dbReference>
<dbReference type="InterPro" id="IPR018357">
    <property type="entry name" value="Hexapep_transf_CS"/>
</dbReference>
<dbReference type="InterPro" id="IPR025877">
    <property type="entry name" value="MobA-like_NTP_Trfase"/>
</dbReference>
<dbReference type="InterPro" id="IPR029044">
    <property type="entry name" value="Nucleotide-diphossugar_trans"/>
</dbReference>
<dbReference type="InterPro" id="IPR011004">
    <property type="entry name" value="Trimer_LpxA-like_sf"/>
</dbReference>
<dbReference type="NCBIfam" id="TIGR01173">
    <property type="entry name" value="glmU"/>
    <property type="match status" value="1"/>
</dbReference>
<dbReference type="NCBIfam" id="NF010933">
    <property type="entry name" value="PRK14353.1"/>
    <property type="match status" value="1"/>
</dbReference>
<dbReference type="PANTHER" id="PTHR43584:SF3">
    <property type="entry name" value="BIFUNCTIONAL PROTEIN GLMU"/>
    <property type="match status" value="1"/>
</dbReference>
<dbReference type="PANTHER" id="PTHR43584">
    <property type="entry name" value="NUCLEOTIDYL TRANSFERASE"/>
    <property type="match status" value="1"/>
</dbReference>
<dbReference type="Pfam" id="PF00132">
    <property type="entry name" value="Hexapep"/>
    <property type="match status" value="3"/>
</dbReference>
<dbReference type="Pfam" id="PF12804">
    <property type="entry name" value="NTP_transf_3"/>
    <property type="match status" value="1"/>
</dbReference>
<dbReference type="SUPFAM" id="SSF53448">
    <property type="entry name" value="Nucleotide-diphospho-sugar transferases"/>
    <property type="match status" value="1"/>
</dbReference>
<dbReference type="SUPFAM" id="SSF51161">
    <property type="entry name" value="Trimeric LpxA-like enzymes"/>
    <property type="match status" value="1"/>
</dbReference>
<dbReference type="PROSITE" id="PS00101">
    <property type="entry name" value="HEXAPEP_TRANSFERASES"/>
    <property type="match status" value="1"/>
</dbReference>
<feature type="chain" id="PRO_0000233834" description="Bifunctional protein GlmU">
    <location>
        <begin position="1"/>
        <end position="452"/>
    </location>
</feature>
<feature type="region of interest" description="Pyrophosphorylase" evidence="1">
    <location>
        <begin position="1"/>
        <end position="232"/>
    </location>
</feature>
<feature type="region of interest" description="Linker" evidence="1">
    <location>
        <begin position="233"/>
        <end position="253"/>
    </location>
</feature>
<feature type="region of interest" description="N-acetyltransferase" evidence="1">
    <location>
        <begin position="254"/>
        <end position="452"/>
    </location>
</feature>
<feature type="active site" description="Proton acceptor" evidence="1">
    <location>
        <position position="349"/>
    </location>
</feature>
<feature type="binding site" evidence="1">
    <location>
        <begin position="11"/>
        <end position="14"/>
    </location>
    <ligand>
        <name>UDP-N-acetyl-alpha-D-glucosamine</name>
        <dbReference type="ChEBI" id="CHEBI:57705"/>
    </ligand>
</feature>
<feature type="binding site" evidence="1">
    <location>
        <position position="25"/>
    </location>
    <ligand>
        <name>UDP-N-acetyl-alpha-D-glucosamine</name>
        <dbReference type="ChEBI" id="CHEBI:57705"/>
    </ligand>
</feature>
<feature type="binding site" evidence="1">
    <location>
        <position position="78"/>
    </location>
    <ligand>
        <name>UDP-N-acetyl-alpha-D-glucosamine</name>
        <dbReference type="ChEBI" id="CHEBI:57705"/>
    </ligand>
</feature>
<feature type="binding site" evidence="1">
    <location>
        <begin position="83"/>
        <end position="84"/>
    </location>
    <ligand>
        <name>UDP-N-acetyl-alpha-D-glucosamine</name>
        <dbReference type="ChEBI" id="CHEBI:57705"/>
    </ligand>
</feature>
<feature type="binding site" evidence="1">
    <location>
        <position position="108"/>
    </location>
    <ligand>
        <name>Mg(2+)</name>
        <dbReference type="ChEBI" id="CHEBI:18420"/>
    </ligand>
</feature>
<feature type="binding site" evidence="1">
    <location>
        <position position="144"/>
    </location>
    <ligand>
        <name>UDP-N-acetyl-alpha-D-glucosamine</name>
        <dbReference type="ChEBI" id="CHEBI:57705"/>
    </ligand>
</feature>
<feature type="binding site" evidence="1">
    <location>
        <position position="158"/>
    </location>
    <ligand>
        <name>UDP-N-acetyl-alpha-D-glucosamine</name>
        <dbReference type="ChEBI" id="CHEBI:57705"/>
    </ligand>
</feature>
<feature type="binding site" evidence="1">
    <location>
        <position position="173"/>
    </location>
    <ligand>
        <name>UDP-N-acetyl-alpha-D-glucosamine</name>
        <dbReference type="ChEBI" id="CHEBI:57705"/>
    </ligand>
</feature>
<feature type="binding site" evidence="1">
    <location>
        <position position="230"/>
    </location>
    <ligand>
        <name>Mg(2+)</name>
        <dbReference type="ChEBI" id="CHEBI:18420"/>
    </ligand>
</feature>
<feature type="binding site" evidence="1">
    <location>
        <position position="230"/>
    </location>
    <ligand>
        <name>UDP-N-acetyl-alpha-D-glucosamine</name>
        <dbReference type="ChEBI" id="CHEBI:57705"/>
    </ligand>
</feature>
<feature type="binding site" evidence="1">
    <location>
        <position position="319"/>
    </location>
    <ligand>
        <name>UDP-N-acetyl-alpha-D-glucosamine</name>
        <dbReference type="ChEBI" id="CHEBI:57705"/>
    </ligand>
</feature>
<feature type="binding site" evidence="1">
    <location>
        <position position="337"/>
    </location>
    <ligand>
        <name>UDP-N-acetyl-alpha-D-glucosamine</name>
        <dbReference type="ChEBI" id="CHEBI:57705"/>
    </ligand>
</feature>
<feature type="binding site" evidence="1">
    <location>
        <position position="352"/>
    </location>
    <ligand>
        <name>UDP-N-acetyl-alpha-D-glucosamine</name>
        <dbReference type="ChEBI" id="CHEBI:57705"/>
    </ligand>
</feature>
<feature type="binding site" evidence="1">
    <location>
        <position position="363"/>
    </location>
    <ligand>
        <name>UDP-N-acetyl-alpha-D-glucosamine</name>
        <dbReference type="ChEBI" id="CHEBI:57705"/>
    </ligand>
</feature>
<feature type="binding site" evidence="1">
    <location>
        <position position="366"/>
    </location>
    <ligand>
        <name>acetyl-CoA</name>
        <dbReference type="ChEBI" id="CHEBI:57288"/>
    </ligand>
</feature>
<feature type="binding site" evidence="1">
    <location>
        <begin position="372"/>
        <end position="373"/>
    </location>
    <ligand>
        <name>acetyl-CoA</name>
        <dbReference type="ChEBI" id="CHEBI:57288"/>
    </ligand>
</feature>
<feature type="binding site" evidence="1">
    <location>
        <position position="391"/>
    </location>
    <ligand>
        <name>acetyl-CoA</name>
        <dbReference type="ChEBI" id="CHEBI:57288"/>
    </ligand>
</feature>
<feature type="binding site" evidence="1">
    <location>
        <position position="409"/>
    </location>
    <ligand>
        <name>acetyl-CoA</name>
        <dbReference type="ChEBI" id="CHEBI:57288"/>
    </ligand>
</feature>
<feature type="binding site" evidence="1">
    <location>
        <position position="426"/>
    </location>
    <ligand>
        <name>acetyl-CoA</name>
        <dbReference type="ChEBI" id="CHEBI:57288"/>
    </ligand>
</feature>
<sequence length="452" mass="47047">MTARNSLTIVLAAGEGTRMRSSLPKVLNPVAGRSLLAHVLSAAPHGERDRLAVVIGPDHQAVGDEAKRVRSDAAIHIQAQRLGTAHAVLAAREAIAQGADDLLIAFGDTPLISAETFARLREPLHDGSSLVVLGFRAADPTGYGRLVVQDGKLTAIREQADASADELKITLCNAGVMAIDGKIALDVLDKIGNANAKGEYYLTDAVGIVRDLGLTASVIETSEDEVRGINTKAQLAEAETVMQTRLRLAAMAAGVTLIAPETVYLAADTTFGKDVVIEPFVVIGPGVSIADGAVIHSFSHLTEAKIGSKAQVGPYARLRPGTSLGDGAKIGNFVETKAAQIDAGAKVNHLTYIGDAHIGASANIGAGTITCNYDGFDKHKTEIGAGAFIGSNSSLVAPVKIGTGAYVGSGSVITKDVPDGALAVERNVQTAKDGWAKRFRDAKSRHRKPKAH</sequence>
<comment type="function">
    <text evidence="1">Catalyzes the last two sequential reactions in the de novo biosynthetic pathway for UDP-N-acetylglucosamine (UDP-GlcNAc). The C-terminal domain catalyzes the transfer of acetyl group from acetyl coenzyme A to glucosamine-1-phosphate (GlcN-1-P) to produce N-acetylglucosamine-1-phosphate (GlcNAc-1-P), which is converted into UDP-GlcNAc by the transfer of uridine 5-monophosphate (from uridine 5-triphosphate), a reaction catalyzed by the N-terminal domain.</text>
</comment>
<comment type="catalytic activity">
    <reaction evidence="1">
        <text>alpha-D-glucosamine 1-phosphate + acetyl-CoA = N-acetyl-alpha-D-glucosamine 1-phosphate + CoA + H(+)</text>
        <dbReference type="Rhea" id="RHEA:13725"/>
        <dbReference type="ChEBI" id="CHEBI:15378"/>
        <dbReference type="ChEBI" id="CHEBI:57287"/>
        <dbReference type="ChEBI" id="CHEBI:57288"/>
        <dbReference type="ChEBI" id="CHEBI:57776"/>
        <dbReference type="ChEBI" id="CHEBI:58516"/>
        <dbReference type="EC" id="2.3.1.157"/>
    </reaction>
</comment>
<comment type="catalytic activity">
    <reaction evidence="1">
        <text>N-acetyl-alpha-D-glucosamine 1-phosphate + UTP + H(+) = UDP-N-acetyl-alpha-D-glucosamine + diphosphate</text>
        <dbReference type="Rhea" id="RHEA:13509"/>
        <dbReference type="ChEBI" id="CHEBI:15378"/>
        <dbReference type="ChEBI" id="CHEBI:33019"/>
        <dbReference type="ChEBI" id="CHEBI:46398"/>
        <dbReference type="ChEBI" id="CHEBI:57705"/>
        <dbReference type="ChEBI" id="CHEBI:57776"/>
        <dbReference type="EC" id="2.7.7.23"/>
    </reaction>
</comment>
<comment type="cofactor">
    <cofactor evidence="1">
        <name>Mg(2+)</name>
        <dbReference type="ChEBI" id="CHEBI:18420"/>
    </cofactor>
    <text evidence="1">Binds 1 Mg(2+) ion per subunit.</text>
</comment>
<comment type="pathway">
    <text evidence="1">Nucleotide-sugar biosynthesis; UDP-N-acetyl-alpha-D-glucosamine biosynthesis; N-acetyl-alpha-D-glucosamine 1-phosphate from alpha-D-glucosamine 6-phosphate (route II): step 2/2.</text>
</comment>
<comment type="pathway">
    <text evidence="1">Nucleotide-sugar biosynthesis; UDP-N-acetyl-alpha-D-glucosamine biosynthesis; UDP-N-acetyl-alpha-D-glucosamine from N-acetyl-alpha-D-glucosamine 1-phosphate: step 1/1.</text>
</comment>
<comment type="pathway">
    <text evidence="1">Bacterial outer membrane biogenesis; LPS lipid A biosynthesis.</text>
</comment>
<comment type="subunit">
    <text evidence="1">Homotrimer.</text>
</comment>
<comment type="subcellular location">
    <subcellularLocation>
        <location evidence="1">Cytoplasm</location>
    </subcellularLocation>
</comment>
<comment type="similarity">
    <text evidence="1">In the N-terminal section; belongs to the N-acetylglucosamine-1-phosphate uridyltransferase family.</text>
</comment>
<comment type="similarity">
    <text evidence="1">In the C-terminal section; belongs to the transferase hexapeptide repeat family.</text>
</comment>
<reference key="1">
    <citation type="journal article" date="2004" name="Nat. Biotechnol.">
        <title>Complete genome sequence of the metabolically versatile photosynthetic bacterium Rhodopseudomonas palustris.</title>
        <authorList>
            <person name="Larimer F.W."/>
            <person name="Chain P."/>
            <person name="Hauser L."/>
            <person name="Lamerdin J.E."/>
            <person name="Malfatti S."/>
            <person name="Do L."/>
            <person name="Land M.L."/>
            <person name="Pelletier D.A."/>
            <person name="Beatty J.T."/>
            <person name="Lang A.S."/>
            <person name="Tabita F.R."/>
            <person name="Gibson J.L."/>
            <person name="Hanson T.E."/>
            <person name="Bobst C."/>
            <person name="Torres y Torres J.L."/>
            <person name="Peres C."/>
            <person name="Harrison F.H."/>
            <person name="Gibson J."/>
            <person name="Harwood C.S."/>
        </authorList>
    </citation>
    <scope>NUCLEOTIDE SEQUENCE [LARGE SCALE GENOMIC DNA]</scope>
    <source>
        <strain>ATCC BAA-98 / CGA009</strain>
    </source>
</reference>
<organism>
    <name type="scientific">Rhodopseudomonas palustris (strain ATCC BAA-98 / CGA009)</name>
    <dbReference type="NCBI Taxonomy" id="258594"/>
    <lineage>
        <taxon>Bacteria</taxon>
        <taxon>Pseudomonadati</taxon>
        <taxon>Pseudomonadota</taxon>
        <taxon>Alphaproteobacteria</taxon>
        <taxon>Hyphomicrobiales</taxon>
        <taxon>Nitrobacteraceae</taxon>
        <taxon>Rhodopseudomonas</taxon>
    </lineage>
</organism>
<evidence type="ECO:0000255" key="1">
    <source>
        <dbReference type="HAMAP-Rule" id="MF_01631"/>
    </source>
</evidence>
<keyword id="KW-0012">Acyltransferase</keyword>
<keyword id="KW-0133">Cell shape</keyword>
<keyword id="KW-0961">Cell wall biogenesis/degradation</keyword>
<keyword id="KW-0963">Cytoplasm</keyword>
<keyword id="KW-0460">Magnesium</keyword>
<keyword id="KW-0479">Metal-binding</keyword>
<keyword id="KW-0511">Multifunctional enzyme</keyword>
<keyword id="KW-0548">Nucleotidyltransferase</keyword>
<keyword id="KW-0573">Peptidoglycan synthesis</keyword>
<keyword id="KW-0677">Repeat</keyword>
<keyword id="KW-0808">Transferase</keyword>